<dbReference type="EC" id="2.7.7.27" evidence="1"/>
<dbReference type="EMBL" id="AF181035">
    <property type="protein sequence ID" value="AAD53958.1"/>
    <property type="molecule type" value="Genomic_DNA"/>
</dbReference>
<dbReference type="EMBL" id="CP000143">
    <property type="protein sequence ID" value="ABA79047.1"/>
    <property type="molecule type" value="Genomic_DNA"/>
</dbReference>
<dbReference type="EMBL" id="AF095720">
    <property type="protein sequence ID" value="AAC64193.1"/>
    <property type="molecule type" value="Genomic_DNA"/>
</dbReference>
<dbReference type="RefSeq" id="WP_002720043.1">
    <property type="nucleotide sequence ID" value="NZ_CP030271.1"/>
</dbReference>
<dbReference type="RefSeq" id="YP_352948.1">
    <property type="nucleotide sequence ID" value="NC_007493.2"/>
</dbReference>
<dbReference type="SMR" id="Q9RNH7"/>
<dbReference type="STRING" id="272943.RSP_2886"/>
<dbReference type="EnsemblBacteria" id="ABA79047">
    <property type="protein sequence ID" value="ABA79047"/>
    <property type="gene ID" value="RSP_2886"/>
</dbReference>
<dbReference type="GeneID" id="3720626"/>
<dbReference type="KEGG" id="rsp:RSP_2886"/>
<dbReference type="PATRIC" id="fig|272943.9.peg.1822"/>
<dbReference type="eggNOG" id="COG0448">
    <property type="taxonomic scope" value="Bacteria"/>
</dbReference>
<dbReference type="OrthoDB" id="9801810at2"/>
<dbReference type="PhylomeDB" id="Q9RNH7"/>
<dbReference type="BRENDA" id="2.7.7.27">
    <property type="organism ID" value="5383"/>
</dbReference>
<dbReference type="UniPathway" id="UPA00164"/>
<dbReference type="Proteomes" id="UP000002703">
    <property type="component" value="Chromosome 1"/>
</dbReference>
<dbReference type="GO" id="GO:0005524">
    <property type="term" value="F:ATP binding"/>
    <property type="evidence" value="ECO:0007669"/>
    <property type="project" value="UniProtKB-KW"/>
</dbReference>
<dbReference type="GO" id="GO:0008878">
    <property type="term" value="F:glucose-1-phosphate adenylyltransferase activity"/>
    <property type="evidence" value="ECO:0007669"/>
    <property type="project" value="UniProtKB-UniRule"/>
</dbReference>
<dbReference type="GO" id="GO:0005978">
    <property type="term" value="P:glycogen biosynthetic process"/>
    <property type="evidence" value="ECO:0007669"/>
    <property type="project" value="UniProtKB-UniRule"/>
</dbReference>
<dbReference type="CDD" id="cd02508">
    <property type="entry name" value="ADP_Glucose_PP"/>
    <property type="match status" value="1"/>
</dbReference>
<dbReference type="CDD" id="cd04651">
    <property type="entry name" value="LbH_G1P_AT_C"/>
    <property type="match status" value="1"/>
</dbReference>
<dbReference type="Gene3D" id="2.160.10.10">
    <property type="entry name" value="Hexapeptide repeat proteins"/>
    <property type="match status" value="1"/>
</dbReference>
<dbReference type="Gene3D" id="3.90.550.10">
    <property type="entry name" value="Spore Coat Polysaccharide Biosynthesis Protein SpsA, Chain A"/>
    <property type="match status" value="1"/>
</dbReference>
<dbReference type="HAMAP" id="MF_00624">
    <property type="entry name" value="GlgC"/>
    <property type="match status" value="1"/>
</dbReference>
<dbReference type="InterPro" id="IPR011831">
    <property type="entry name" value="ADP-Glc_PPase"/>
</dbReference>
<dbReference type="InterPro" id="IPR005836">
    <property type="entry name" value="ADP_Glu_pyroP_CS"/>
</dbReference>
<dbReference type="InterPro" id="IPR023049">
    <property type="entry name" value="GlgC_bac"/>
</dbReference>
<dbReference type="InterPro" id="IPR056818">
    <property type="entry name" value="GlmU/GlgC-like_hexapep"/>
</dbReference>
<dbReference type="InterPro" id="IPR005835">
    <property type="entry name" value="NTP_transferase_dom"/>
</dbReference>
<dbReference type="InterPro" id="IPR029044">
    <property type="entry name" value="Nucleotide-diphossugar_trans"/>
</dbReference>
<dbReference type="InterPro" id="IPR011004">
    <property type="entry name" value="Trimer_LpxA-like_sf"/>
</dbReference>
<dbReference type="NCBIfam" id="TIGR02091">
    <property type="entry name" value="glgC"/>
    <property type="match status" value="1"/>
</dbReference>
<dbReference type="NCBIfam" id="NF001947">
    <property type="entry name" value="PRK00725.1"/>
    <property type="match status" value="1"/>
</dbReference>
<dbReference type="NCBIfam" id="NF002023">
    <property type="entry name" value="PRK00844.1"/>
    <property type="match status" value="1"/>
</dbReference>
<dbReference type="PANTHER" id="PTHR43523:SF2">
    <property type="entry name" value="GLUCOSE-1-PHOSPHATE ADENYLYLTRANSFERASE"/>
    <property type="match status" value="1"/>
</dbReference>
<dbReference type="PANTHER" id="PTHR43523">
    <property type="entry name" value="GLUCOSE-1-PHOSPHATE ADENYLYLTRANSFERASE-RELATED"/>
    <property type="match status" value="1"/>
</dbReference>
<dbReference type="Pfam" id="PF24894">
    <property type="entry name" value="Hexapep_GlmU"/>
    <property type="match status" value="1"/>
</dbReference>
<dbReference type="Pfam" id="PF00483">
    <property type="entry name" value="NTP_transferase"/>
    <property type="match status" value="1"/>
</dbReference>
<dbReference type="SUPFAM" id="SSF53448">
    <property type="entry name" value="Nucleotide-diphospho-sugar transferases"/>
    <property type="match status" value="1"/>
</dbReference>
<dbReference type="SUPFAM" id="SSF51161">
    <property type="entry name" value="Trimeric LpxA-like enzymes"/>
    <property type="match status" value="1"/>
</dbReference>
<dbReference type="PROSITE" id="PS00808">
    <property type="entry name" value="ADP_GLC_PYROPHOSPH_1"/>
    <property type="match status" value="1"/>
</dbReference>
<dbReference type="PROSITE" id="PS00809">
    <property type="entry name" value="ADP_GLC_PYROPHOSPH_2"/>
    <property type="match status" value="1"/>
</dbReference>
<comment type="function">
    <text evidence="1">Involved in the biosynthesis of ADP-glucose, a building block required for the elongation reactions to produce glycogen. Catalyzes the reaction between ATP and alpha-D-glucose 1-phosphate (G1P) to produce pyrophosphate and ADP-Glc.</text>
</comment>
<comment type="catalytic activity">
    <reaction evidence="1">
        <text>alpha-D-glucose 1-phosphate + ATP + H(+) = ADP-alpha-D-glucose + diphosphate</text>
        <dbReference type="Rhea" id="RHEA:12120"/>
        <dbReference type="ChEBI" id="CHEBI:15378"/>
        <dbReference type="ChEBI" id="CHEBI:30616"/>
        <dbReference type="ChEBI" id="CHEBI:33019"/>
        <dbReference type="ChEBI" id="CHEBI:57498"/>
        <dbReference type="ChEBI" id="CHEBI:58601"/>
        <dbReference type="EC" id="2.7.7.27"/>
    </reaction>
</comment>
<comment type="pathway">
    <text evidence="1">Glycan biosynthesis; glycogen biosynthesis.</text>
</comment>
<comment type="subunit">
    <text evidence="1">Homotetramer.</text>
</comment>
<comment type="similarity">
    <text evidence="1">Belongs to the bacterial/plant glucose-1-phosphate adenylyltransferase family.</text>
</comment>
<keyword id="KW-0067">ATP-binding</keyword>
<keyword id="KW-0119">Carbohydrate metabolism</keyword>
<keyword id="KW-0320">Glycogen biosynthesis</keyword>
<keyword id="KW-0321">Glycogen metabolism</keyword>
<keyword id="KW-0547">Nucleotide-binding</keyword>
<keyword id="KW-0548">Nucleotidyltransferase</keyword>
<keyword id="KW-1185">Reference proteome</keyword>
<keyword id="KW-0808">Transferase</keyword>
<organism>
    <name type="scientific">Cereibacter sphaeroides (strain ATCC 17023 / DSM 158 / JCM 6121 / CCUG 31486 / LMG 2827 / NBRC 12203 / NCIMB 8253 / ATH 2.4.1.)</name>
    <name type="common">Rhodobacter sphaeroides</name>
    <dbReference type="NCBI Taxonomy" id="272943"/>
    <lineage>
        <taxon>Bacteria</taxon>
        <taxon>Pseudomonadati</taxon>
        <taxon>Pseudomonadota</taxon>
        <taxon>Alphaproteobacteria</taxon>
        <taxon>Rhodobacterales</taxon>
        <taxon>Paracoccaceae</taxon>
        <taxon>Cereibacter</taxon>
    </lineage>
</organism>
<protein>
    <recommendedName>
        <fullName evidence="1">Glucose-1-phosphate adenylyltransferase</fullName>
        <ecNumber evidence="1">2.7.7.27</ecNumber>
    </recommendedName>
    <alternativeName>
        <fullName evidence="1">ADP-glucose pyrophosphorylase</fullName>
        <shortName evidence="1">ADPGlc PPase</shortName>
    </alternativeName>
    <alternativeName>
        <fullName evidence="1">ADP-glucose synthase</fullName>
    </alternativeName>
</protein>
<proteinExistence type="inferred from homology"/>
<name>GLGC_CERS4</name>
<gene>
    <name evidence="1" type="primary">glgC</name>
    <name type="ordered locus">RHOS4_14790</name>
    <name type="ordered locus">RSP_2886</name>
</gene>
<evidence type="ECO:0000255" key="1">
    <source>
        <dbReference type="HAMAP-Rule" id="MF_00624"/>
    </source>
</evidence>
<evidence type="ECO:0000305" key="2"/>
<feature type="chain" id="PRO_0000195323" description="Glucose-1-phosphate adenylyltransferase">
    <location>
        <begin position="1"/>
        <end position="423"/>
    </location>
</feature>
<feature type="binding site" evidence="1">
    <location>
        <position position="107"/>
    </location>
    <ligand>
        <name>alpha-D-glucose 1-phosphate</name>
        <dbReference type="ChEBI" id="CHEBI:58601"/>
    </ligand>
</feature>
<feature type="binding site" evidence="1">
    <location>
        <position position="172"/>
    </location>
    <ligand>
        <name>alpha-D-glucose 1-phosphate</name>
        <dbReference type="ChEBI" id="CHEBI:58601"/>
    </ligand>
</feature>
<feature type="binding site" evidence="1">
    <location>
        <begin position="187"/>
        <end position="188"/>
    </location>
    <ligand>
        <name>alpha-D-glucose 1-phosphate</name>
        <dbReference type="ChEBI" id="CHEBI:58601"/>
    </ligand>
</feature>
<feature type="binding site" evidence="1">
    <location>
        <position position="205"/>
    </location>
    <ligand>
        <name>alpha-D-glucose 1-phosphate</name>
        <dbReference type="ChEBI" id="CHEBI:58601"/>
    </ligand>
</feature>
<feature type="sequence conflict" description="In Ref. 3; AAC64193." evidence="2" ref="3">
    <original>P</original>
    <variation>T</variation>
    <location>
        <position position="196"/>
    </location>
</feature>
<feature type="sequence conflict" description="In Ref. 3; AAC64193." evidence="2" ref="3">
    <original>D</original>
    <variation>K</variation>
    <location>
        <position position="212"/>
    </location>
</feature>
<sequence>MKAQPPLRLTAQAMAFVLAGGRGSRLKELTDRRAKPAVYFGGKARIIDFALSNAMNSGIRKMAIATQYKAHSLIRHIQRGWNFFREERNEYLDILPASQRVDENRWYLGTADAVTQNIDIVDSYDIKYVIILAGDHVYKMDYEIMLRQHCETGADVTIGCLTVPRAEATAFGVMHVDANLRITDFLEKPADPPGIPGDEANALASMGIYVFDWAFLRDLLIRDAEDPNSSHDFGHDLIPAIVKNGKAMAHRFSDSCVMTGLETEPYWRDVGTIDAFWQANIDLTDFTPKLDLYDREWPIWTYSQIVPPAKFIHDSENRRGTAISSLVSGDCIVSGSEIRSSLLFTGCRTHSYSSMSHVVALPHVTVNRKADLTNCVLDRGVVVPEGLVIGQDAEEDARWFRRSEGGIVLVTQDMLDARARALN</sequence>
<reference key="1">
    <citation type="submission" date="1999-08" db="EMBL/GenBank/DDBJ databases">
        <title>Cloning, sequencing, and expression of the ADP-glucose pyrophosphorylase gene (glgC) from Rhodobacter sphaeroides 2.4.1.</title>
        <authorList>
            <person name="Igarashi R.Y."/>
            <person name="Meyer C.R."/>
        </authorList>
    </citation>
    <scope>NUCLEOTIDE SEQUENCE [GENOMIC DNA]</scope>
</reference>
<reference key="2">
    <citation type="submission" date="2005-09" db="EMBL/GenBank/DDBJ databases">
        <title>Complete sequence of chromosome 1 of Rhodobacter sphaeroides 2.4.1.</title>
        <authorList>
            <person name="Copeland A."/>
            <person name="Lucas S."/>
            <person name="Lapidus A."/>
            <person name="Barry K."/>
            <person name="Detter J.C."/>
            <person name="Glavina T."/>
            <person name="Hammon N."/>
            <person name="Israni S."/>
            <person name="Pitluck S."/>
            <person name="Richardson P."/>
            <person name="Mackenzie C."/>
            <person name="Choudhary M."/>
            <person name="Larimer F."/>
            <person name="Hauser L.J."/>
            <person name="Land M."/>
            <person name="Donohue T.J."/>
            <person name="Kaplan S."/>
        </authorList>
    </citation>
    <scope>NUCLEOTIDE SEQUENCE [LARGE SCALE GENOMIC DNA]</scope>
    <source>
        <strain>ATCC 17023 / DSM 158 / JCM 6121 / CCUG 31486 / LMG 2827 / NBRC 12203 / NCIMB 8253 / ATH 2.4.1.</strain>
    </source>
</reference>
<reference key="3">
    <citation type="submission" date="1998-09" db="EMBL/GenBank/DDBJ databases">
        <authorList>
            <person name="Igarashi R.Y."/>
            <person name="Meyer C.R."/>
        </authorList>
    </citation>
    <scope>NUCLEOTIDE SEQUENCE [GENOMIC DNA] OF 35-212</scope>
</reference>
<accession>Q9RNH7</accession>
<accession>O87670</accession>
<accession>Q3J2D7</accession>